<name>ASSY_METHJ</name>
<accession>Q2FLD8</accession>
<organism>
    <name type="scientific">Methanospirillum hungatei JF-1 (strain ATCC 27890 / DSM 864 / NBRC 100397 / JF-1)</name>
    <dbReference type="NCBI Taxonomy" id="323259"/>
    <lineage>
        <taxon>Archaea</taxon>
        <taxon>Methanobacteriati</taxon>
        <taxon>Methanobacteriota</taxon>
        <taxon>Stenosarchaea group</taxon>
        <taxon>Methanomicrobia</taxon>
        <taxon>Methanomicrobiales</taxon>
        <taxon>Methanospirillaceae</taxon>
        <taxon>Methanospirillum</taxon>
    </lineage>
</organism>
<dbReference type="EC" id="6.3.4.5" evidence="1"/>
<dbReference type="EMBL" id="CP000254">
    <property type="protein sequence ID" value="ABD39894.1"/>
    <property type="molecule type" value="Genomic_DNA"/>
</dbReference>
<dbReference type="RefSeq" id="WP_011447190.1">
    <property type="nucleotide sequence ID" value="NC_007796.1"/>
</dbReference>
<dbReference type="SMR" id="Q2FLD8"/>
<dbReference type="FunCoup" id="Q2FLD8">
    <property type="interactions" value="191"/>
</dbReference>
<dbReference type="STRING" id="323259.Mhun_0116"/>
<dbReference type="EnsemblBacteria" id="ABD39894">
    <property type="protein sequence ID" value="ABD39894"/>
    <property type="gene ID" value="Mhun_0116"/>
</dbReference>
<dbReference type="GeneID" id="3923735"/>
<dbReference type="KEGG" id="mhu:Mhun_0116"/>
<dbReference type="eggNOG" id="arCOG00112">
    <property type="taxonomic scope" value="Archaea"/>
</dbReference>
<dbReference type="HOGENOM" id="CLU_032784_4_0_2"/>
<dbReference type="InParanoid" id="Q2FLD8"/>
<dbReference type="OrthoDB" id="5877at2157"/>
<dbReference type="UniPathway" id="UPA00068">
    <property type="reaction ID" value="UER00113"/>
</dbReference>
<dbReference type="Proteomes" id="UP000001941">
    <property type="component" value="Chromosome"/>
</dbReference>
<dbReference type="GO" id="GO:0005737">
    <property type="term" value="C:cytoplasm"/>
    <property type="evidence" value="ECO:0007669"/>
    <property type="project" value="UniProtKB-SubCell"/>
</dbReference>
<dbReference type="GO" id="GO:0004055">
    <property type="term" value="F:argininosuccinate synthase activity"/>
    <property type="evidence" value="ECO:0007669"/>
    <property type="project" value="UniProtKB-UniRule"/>
</dbReference>
<dbReference type="GO" id="GO:0005524">
    <property type="term" value="F:ATP binding"/>
    <property type="evidence" value="ECO:0007669"/>
    <property type="project" value="UniProtKB-UniRule"/>
</dbReference>
<dbReference type="GO" id="GO:0000053">
    <property type="term" value="P:argininosuccinate metabolic process"/>
    <property type="evidence" value="ECO:0007669"/>
    <property type="project" value="TreeGrafter"/>
</dbReference>
<dbReference type="GO" id="GO:0006526">
    <property type="term" value="P:L-arginine biosynthetic process"/>
    <property type="evidence" value="ECO:0007669"/>
    <property type="project" value="UniProtKB-UniRule"/>
</dbReference>
<dbReference type="GO" id="GO:0000050">
    <property type="term" value="P:urea cycle"/>
    <property type="evidence" value="ECO:0007669"/>
    <property type="project" value="TreeGrafter"/>
</dbReference>
<dbReference type="CDD" id="cd01999">
    <property type="entry name" value="ASS"/>
    <property type="match status" value="1"/>
</dbReference>
<dbReference type="FunFam" id="3.40.50.620:FF:000019">
    <property type="entry name" value="Argininosuccinate synthase"/>
    <property type="match status" value="1"/>
</dbReference>
<dbReference type="FunFam" id="3.90.1260.10:FF:000007">
    <property type="entry name" value="Argininosuccinate synthase"/>
    <property type="match status" value="1"/>
</dbReference>
<dbReference type="Gene3D" id="3.90.1260.10">
    <property type="entry name" value="Argininosuccinate synthetase, chain A, domain 2"/>
    <property type="match status" value="1"/>
</dbReference>
<dbReference type="Gene3D" id="3.40.50.620">
    <property type="entry name" value="HUPs"/>
    <property type="match status" value="1"/>
</dbReference>
<dbReference type="HAMAP" id="MF_00005">
    <property type="entry name" value="Arg_succ_synth_type1"/>
    <property type="match status" value="1"/>
</dbReference>
<dbReference type="InterPro" id="IPR048268">
    <property type="entry name" value="Arginosuc_syn_C"/>
</dbReference>
<dbReference type="InterPro" id="IPR048267">
    <property type="entry name" value="Arginosuc_syn_N"/>
</dbReference>
<dbReference type="InterPro" id="IPR001518">
    <property type="entry name" value="Arginosuc_synth"/>
</dbReference>
<dbReference type="InterPro" id="IPR018223">
    <property type="entry name" value="Arginosuc_synth_CS"/>
</dbReference>
<dbReference type="InterPro" id="IPR023434">
    <property type="entry name" value="Arginosuc_synth_type_1_subfam"/>
</dbReference>
<dbReference type="InterPro" id="IPR024074">
    <property type="entry name" value="AS_cat/multimer_dom_body"/>
</dbReference>
<dbReference type="InterPro" id="IPR014729">
    <property type="entry name" value="Rossmann-like_a/b/a_fold"/>
</dbReference>
<dbReference type="NCBIfam" id="TIGR00032">
    <property type="entry name" value="argG"/>
    <property type="match status" value="1"/>
</dbReference>
<dbReference type="NCBIfam" id="NF001770">
    <property type="entry name" value="PRK00509.1"/>
    <property type="match status" value="1"/>
</dbReference>
<dbReference type="NCBIfam" id="NF010392">
    <property type="entry name" value="PRK13820.1"/>
    <property type="match status" value="1"/>
</dbReference>
<dbReference type="PANTHER" id="PTHR11587">
    <property type="entry name" value="ARGININOSUCCINATE SYNTHASE"/>
    <property type="match status" value="1"/>
</dbReference>
<dbReference type="PANTHER" id="PTHR11587:SF2">
    <property type="entry name" value="ARGININOSUCCINATE SYNTHASE"/>
    <property type="match status" value="1"/>
</dbReference>
<dbReference type="Pfam" id="PF20979">
    <property type="entry name" value="Arginosuc_syn_C"/>
    <property type="match status" value="1"/>
</dbReference>
<dbReference type="Pfam" id="PF00764">
    <property type="entry name" value="Arginosuc_synth"/>
    <property type="match status" value="1"/>
</dbReference>
<dbReference type="SUPFAM" id="SSF52402">
    <property type="entry name" value="Adenine nucleotide alpha hydrolases-like"/>
    <property type="match status" value="1"/>
</dbReference>
<dbReference type="SUPFAM" id="SSF69864">
    <property type="entry name" value="Argininosuccinate synthetase, C-terminal domain"/>
    <property type="match status" value="1"/>
</dbReference>
<dbReference type="PROSITE" id="PS00564">
    <property type="entry name" value="ARGININOSUCCIN_SYN_1"/>
    <property type="match status" value="1"/>
</dbReference>
<dbReference type="PROSITE" id="PS00565">
    <property type="entry name" value="ARGININOSUCCIN_SYN_2"/>
    <property type="match status" value="1"/>
</dbReference>
<reference key="1">
    <citation type="journal article" date="2016" name="Stand. Genomic Sci.">
        <title>Complete genome sequence of Methanospirillum hungatei type strain JF1.</title>
        <authorList>
            <person name="Gunsalus R.P."/>
            <person name="Cook L.E."/>
            <person name="Crable B."/>
            <person name="Rohlin L."/>
            <person name="McDonald E."/>
            <person name="Mouttaki H."/>
            <person name="Sieber J.R."/>
            <person name="Poweleit N."/>
            <person name="Zhou H."/>
            <person name="Lapidus A.L."/>
            <person name="Daligault H.E."/>
            <person name="Land M."/>
            <person name="Gilna P."/>
            <person name="Ivanova N."/>
            <person name="Kyrpides N."/>
            <person name="Culley D.E."/>
            <person name="McInerney M.J."/>
        </authorList>
    </citation>
    <scope>NUCLEOTIDE SEQUENCE [LARGE SCALE GENOMIC DNA]</scope>
    <source>
        <strain>ATCC 27890 / DSM 864 / NBRC 100397 / JF-1</strain>
    </source>
</reference>
<proteinExistence type="inferred from homology"/>
<sequence>MGKGTVVLAYSGGLDTSICIPLLKEEYGYDRVVTVAADVGQRKEEISIAEEKGKRFADKHYTLDLIDQFVDRCLMPSIKANGLYEGYPMGTSLARPVIAEAVVEIAKKEDATAVAHGCTGKGNDQLRFDVVFRAADLEVIAPIRERNMTREWEIGYAEKHGIPVPVDKEKPWSVDENLWSRSIEGGKLEDPAFHPPEEIYAWTVSPLKAPDEPQVLSITFEAGIPVALDGKRMKGADLIRTVGQIAGGHGIGRNDMMENRVLGIKAREIYEHPAANVLLTAHADLERLVLTREEYAFKQSVDAKWAQLAYYGLIYEPLWDALNAFIDTTQKRVNGTVDVRLFKGSVTVLGRSSPDSFYSIDVASFDSTTIDQTDAIGYSMYYGLQARLVRKKQKK</sequence>
<evidence type="ECO:0000255" key="1">
    <source>
        <dbReference type="HAMAP-Rule" id="MF_00005"/>
    </source>
</evidence>
<protein>
    <recommendedName>
        <fullName evidence="1">Argininosuccinate synthase</fullName>
        <ecNumber evidence="1">6.3.4.5</ecNumber>
    </recommendedName>
    <alternativeName>
        <fullName evidence="1">Citrulline--aspartate ligase</fullName>
    </alternativeName>
</protein>
<comment type="catalytic activity">
    <reaction evidence="1">
        <text>L-citrulline + L-aspartate + ATP = 2-(N(omega)-L-arginino)succinate + AMP + diphosphate + H(+)</text>
        <dbReference type="Rhea" id="RHEA:10932"/>
        <dbReference type="ChEBI" id="CHEBI:15378"/>
        <dbReference type="ChEBI" id="CHEBI:29991"/>
        <dbReference type="ChEBI" id="CHEBI:30616"/>
        <dbReference type="ChEBI" id="CHEBI:33019"/>
        <dbReference type="ChEBI" id="CHEBI:57472"/>
        <dbReference type="ChEBI" id="CHEBI:57743"/>
        <dbReference type="ChEBI" id="CHEBI:456215"/>
        <dbReference type="EC" id="6.3.4.5"/>
    </reaction>
</comment>
<comment type="pathway">
    <text evidence="1">Amino-acid biosynthesis; L-arginine biosynthesis; L-arginine from L-ornithine and carbamoyl phosphate: step 2/3.</text>
</comment>
<comment type="subunit">
    <text evidence="1">Homotetramer.</text>
</comment>
<comment type="subcellular location">
    <subcellularLocation>
        <location evidence="1">Cytoplasm</location>
    </subcellularLocation>
</comment>
<comment type="similarity">
    <text evidence="1">Belongs to the argininosuccinate synthase family. Type 1 subfamily.</text>
</comment>
<gene>
    <name evidence="1" type="primary">argG</name>
    <name type="ordered locus">Mhun_0116</name>
</gene>
<keyword id="KW-0028">Amino-acid biosynthesis</keyword>
<keyword id="KW-0055">Arginine biosynthesis</keyword>
<keyword id="KW-0067">ATP-binding</keyword>
<keyword id="KW-0963">Cytoplasm</keyword>
<keyword id="KW-0436">Ligase</keyword>
<keyword id="KW-0547">Nucleotide-binding</keyword>
<keyword id="KW-1185">Reference proteome</keyword>
<feature type="chain" id="PRO_0000263997" description="Argininosuccinate synthase">
    <location>
        <begin position="1"/>
        <end position="395"/>
    </location>
</feature>
<feature type="binding site" evidence="1">
    <location>
        <begin position="9"/>
        <end position="17"/>
    </location>
    <ligand>
        <name>ATP</name>
        <dbReference type="ChEBI" id="CHEBI:30616"/>
    </ligand>
</feature>
<feature type="binding site" evidence="1">
    <location>
        <position position="37"/>
    </location>
    <ligand>
        <name>ATP</name>
        <dbReference type="ChEBI" id="CHEBI:30616"/>
    </ligand>
</feature>
<feature type="binding site" evidence="1">
    <location>
        <position position="87"/>
    </location>
    <ligand>
        <name>L-citrulline</name>
        <dbReference type="ChEBI" id="CHEBI:57743"/>
    </ligand>
</feature>
<feature type="binding site" evidence="1">
    <location>
        <position position="92"/>
    </location>
    <ligand>
        <name>L-citrulline</name>
        <dbReference type="ChEBI" id="CHEBI:57743"/>
    </ligand>
</feature>
<feature type="binding site" evidence="1">
    <location>
        <position position="117"/>
    </location>
    <ligand>
        <name>ATP</name>
        <dbReference type="ChEBI" id="CHEBI:30616"/>
    </ligand>
</feature>
<feature type="binding site" evidence="1">
    <location>
        <position position="119"/>
    </location>
    <ligand>
        <name>L-aspartate</name>
        <dbReference type="ChEBI" id="CHEBI:29991"/>
    </ligand>
</feature>
<feature type="binding site" evidence="1">
    <location>
        <position position="123"/>
    </location>
    <ligand>
        <name>L-aspartate</name>
        <dbReference type="ChEBI" id="CHEBI:29991"/>
    </ligand>
</feature>
<feature type="binding site" evidence="1">
    <location>
        <position position="123"/>
    </location>
    <ligand>
        <name>L-citrulline</name>
        <dbReference type="ChEBI" id="CHEBI:57743"/>
    </ligand>
</feature>
<feature type="binding site" evidence="1">
    <location>
        <position position="124"/>
    </location>
    <ligand>
        <name>L-aspartate</name>
        <dbReference type="ChEBI" id="CHEBI:29991"/>
    </ligand>
</feature>
<feature type="binding site" evidence="1">
    <location>
        <position position="127"/>
    </location>
    <ligand>
        <name>L-citrulline</name>
        <dbReference type="ChEBI" id="CHEBI:57743"/>
    </ligand>
</feature>
<feature type="binding site" evidence="1">
    <location>
        <position position="173"/>
    </location>
    <ligand>
        <name>L-citrulline</name>
        <dbReference type="ChEBI" id="CHEBI:57743"/>
    </ligand>
</feature>
<feature type="binding site" evidence="1">
    <location>
        <position position="182"/>
    </location>
    <ligand>
        <name>L-citrulline</name>
        <dbReference type="ChEBI" id="CHEBI:57743"/>
    </ligand>
</feature>
<feature type="binding site" evidence="1">
    <location>
        <position position="258"/>
    </location>
    <ligand>
        <name>L-citrulline</name>
        <dbReference type="ChEBI" id="CHEBI:57743"/>
    </ligand>
</feature>
<feature type="binding site" evidence="1">
    <location>
        <position position="270"/>
    </location>
    <ligand>
        <name>L-citrulline</name>
        <dbReference type="ChEBI" id="CHEBI:57743"/>
    </ligand>
</feature>